<name>LN28B_CHICK</name>
<keyword id="KW-0479">Metal-binding</keyword>
<keyword id="KW-0539">Nucleus</keyword>
<keyword id="KW-1185">Reference proteome</keyword>
<keyword id="KW-0677">Repeat</keyword>
<keyword id="KW-0694">RNA-binding</keyword>
<keyword id="KW-0943">RNA-mediated gene silencing</keyword>
<keyword id="KW-0862">Zinc</keyword>
<keyword id="KW-0863">Zinc-finger</keyword>
<organism>
    <name type="scientific">Gallus gallus</name>
    <name type="common">Chicken</name>
    <dbReference type="NCBI Taxonomy" id="9031"/>
    <lineage>
        <taxon>Eukaryota</taxon>
        <taxon>Metazoa</taxon>
        <taxon>Chordata</taxon>
        <taxon>Craniata</taxon>
        <taxon>Vertebrata</taxon>
        <taxon>Euteleostomi</taxon>
        <taxon>Archelosauria</taxon>
        <taxon>Archosauria</taxon>
        <taxon>Dinosauria</taxon>
        <taxon>Saurischia</taxon>
        <taxon>Theropoda</taxon>
        <taxon>Coelurosauria</taxon>
        <taxon>Aves</taxon>
        <taxon>Neognathae</taxon>
        <taxon>Galloanserae</taxon>
        <taxon>Galliformes</taxon>
        <taxon>Phasianidae</taxon>
        <taxon>Phasianinae</taxon>
        <taxon>Gallus</taxon>
    </lineage>
</organism>
<feature type="chain" id="PRO_0000253795" description="Protein lin-28 homolog B">
    <location>
        <begin position="1"/>
        <end position="250"/>
    </location>
</feature>
<feature type="domain" description="CSD">
    <location>
        <begin position="29"/>
        <end position="102"/>
    </location>
</feature>
<feature type="zinc finger region" description="CCHC-type 1" evidence="3">
    <location>
        <begin position="127"/>
        <end position="144"/>
    </location>
</feature>
<feature type="zinc finger region" description="CCHC-type 2" evidence="3">
    <location>
        <begin position="149"/>
        <end position="166"/>
    </location>
</feature>
<feature type="region of interest" description="Disordered" evidence="4">
    <location>
        <begin position="1"/>
        <end position="27"/>
    </location>
</feature>
<feature type="region of interest" description="Disordered" evidence="4">
    <location>
        <begin position="98"/>
        <end position="126"/>
    </location>
</feature>
<feature type="region of interest" description="Disordered" evidence="4">
    <location>
        <begin position="165"/>
        <end position="250"/>
    </location>
</feature>
<feature type="compositionally biased region" description="Basic and acidic residues" evidence="4">
    <location>
        <begin position="9"/>
        <end position="18"/>
    </location>
</feature>
<feature type="compositionally biased region" description="Basic residues" evidence="4">
    <location>
        <begin position="114"/>
        <end position="125"/>
    </location>
</feature>
<feature type="compositionally biased region" description="Polar residues" evidence="4">
    <location>
        <begin position="168"/>
        <end position="177"/>
    </location>
</feature>
<feature type="compositionally biased region" description="Low complexity" evidence="4">
    <location>
        <begin position="200"/>
        <end position="209"/>
    </location>
</feature>
<feature type="compositionally biased region" description="Basic and acidic residues" evidence="4">
    <location>
        <begin position="210"/>
        <end position="219"/>
    </location>
</feature>
<feature type="binding site" evidence="1">
    <location>
        <position position="129"/>
    </location>
    <ligand>
        <name>Zn(2+)</name>
        <dbReference type="ChEBI" id="CHEBI:29105"/>
        <label>1</label>
    </ligand>
</feature>
<feature type="binding site" evidence="1">
    <location>
        <position position="132"/>
    </location>
    <ligand>
        <name>Zn(2+)</name>
        <dbReference type="ChEBI" id="CHEBI:29105"/>
        <label>1</label>
    </ligand>
</feature>
<feature type="binding site" evidence="1">
    <location>
        <position position="137"/>
    </location>
    <ligand>
        <name>Zn(2+)</name>
        <dbReference type="ChEBI" id="CHEBI:29105"/>
        <label>1</label>
    </ligand>
</feature>
<feature type="binding site" evidence="1">
    <location>
        <position position="142"/>
    </location>
    <ligand>
        <name>Zn(2+)</name>
        <dbReference type="ChEBI" id="CHEBI:29105"/>
        <label>1</label>
    </ligand>
</feature>
<feature type="binding site" evidence="1">
    <location>
        <position position="151"/>
    </location>
    <ligand>
        <name>Zn(2+)</name>
        <dbReference type="ChEBI" id="CHEBI:29105"/>
        <label>2</label>
    </ligand>
</feature>
<feature type="binding site" evidence="1">
    <location>
        <position position="154"/>
    </location>
    <ligand>
        <name>Zn(2+)</name>
        <dbReference type="ChEBI" id="CHEBI:29105"/>
        <label>2</label>
    </ligand>
</feature>
<feature type="binding site" evidence="1">
    <location>
        <position position="159"/>
    </location>
    <ligand>
        <name>Zn(2+)</name>
        <dbReference type="ChEBI" id="CHEBI:29105"/>
        <label>2</label>
    </ligand>
</feature>
<feature type="binding site" evidence="1">
    <location>
        <position position="164"/>
    </location>
    <ligand>
        <name>Zn(2+)</name>
        <dbReference type="ChEBI" id="CHEBI:29105"/>
        <label>2</label>
    </ligand>
</feature>
<reference key="1">
    <citation type="submission" date="2005-07" db="EMBL/GenBank/DDBJ databases">
        <title>Expression of Lin28A and Lin28B in post-implantation mouse embryos.</title>
        <authorList>
            <person name="Moss E.G."/>
            <person name="Kemper K."/>
        </authorList>
    </citation>
    <scope>NUCLEOTIDE SEQUENCE [MRNA]</scope>
</reference>
<accession>Q45KJ4</accession>
<dbReference type="EMBL" id="DQ127227">
    <property type="protein sequence ID" value="AAZ38896.1"/>
    <property type="molecule type" value="mRNA"/>
</dbReference>
<dbReference type="RefSeq" id="NP_001029990.1">
    <property type="nucleotide sequence ID" value="NM_001034818.2"/>
</dbReference>
<dbReference type="SMR" id="Q45KJ4"/>
<dbReference type="FunCoup" id="Q45KJ4">
    <property type="interactions" value="72"/>
</dbReference>
<dbReference type="STRING" id="9031.ENSGALP00000052382"/>
<dbReference type="PaxDb" id="9031-ENSGALP00000040862"/>
<dbReference type="Ensembl" id="ENSGALT00010032112.1">
    <property type="protein sequence ID" value="ENSGALP00010018902.1"/>
    <property type="gene ID" value="ENSGALG00010013340.1"/>
</dbReference>
<dbReference type="GeneID" id="421786"/>
<dbReference type="KEGG" id="gga:421786"/>
<dbReference type="CTD" id="389421"/>
<dbReference type="VEuPathDB" id="HostDB:geneid_421786"/>
<dbReference type="eggNOG" id="KOG3070">
    <property type="taxonomic scope" value="Eukaryota"/>
</dbReference>
<dbReference type="GeneTree" id="ENSGT00940000153295"/>
<dbReference type="HOGENOM" id="CLU_089169_1_1_1"/>
<dbReference type="InParanoid" id="Q45KJ4"/>
<dbReference type="OrthoDB" id="422005at2759"/>
<dbReference type="PhylomeDB" id="Q45KJ4"/>
<dbReference type="TreeFam" id="TF316240"/>
<dbReference type="PRO" id="PR:Q45KJ4"/>
<dbReference type="Proteomes" id="UP000000539">
    <property type="component" value="Chromosome 3"/>
</dbReference>
<dbReference type="Bgee" id="ENSGALG00000026761">
    <property type="expression patterns" value="Expressed in testis and 3 other cell types or tissues"/>
</dbReference>
<dbReference type="GO" id="GO:0005737">
    <property type="term" value="C:cytoplasm"/>
    <property type="evidence" value="ECO:0000318"/>
    <property type="project" value="GO_Central"/>
</dbReference>
<dbReference type="GO" id="GO:0005730">
    <property type="term" value="C:nucleolus"/>
    <property type="evidence" value="ECO:0007669"/>
    <property type="project" value="UniProtKB-SubCell"/>
</dbReference>
<dbReference type="GO" id="GO:0005634">
    <property type="term" value="C:nucleus"/>
    <property type="evidence" value="ECO:0000318"/>
    <property type="project" value="GO_Central"/>
</dbReference>
<dbReference type="GO" id="GO:0003729">
    <property type="term" value="F:mRNA binding"/>
    <property type="evidence" value="ECO:0000318"/>
    <property type="project" value="GO_Central"/>
</dbReference>
<dbReference type="GO" id="GO:0003723">
    <property type="term" value="F:RNA binding"/>
    <property type="evidence" value="ECO:0000250"/>
    <property type="project" value="UniProtKB"/>
</dbReference>
<dbReference type="GO" id="GO:0008270">
    <property type="term" value="F:zinc ion binding"/>
    <property type="evidence" value="ECO:0007669"/>
    <property type="project" value="UniProtKB-KW"/>
</dbReference>
<dbReference type="GO" id="GO:0010587">
    <property type="term" value="P:miRNA catabolic process"/>
    <property type="evidence" value="ECO:0000250"/>
    <property type="project" value="UniProtKB"/>
</dbReference>
<dbReference type="GO" id="GO:0031054">
    <property type="term" value="P:pre-miRNA processing"/>
    <property type="evidence" value="ECO:0000250"/>
    <property type="project" value="UniProtKB"/>
</dbReference>
<dbReference type="GO" id="GO:0031123">
    <property type="term" value="P:RNA 3'-end processing"/>
    <property type="evidence" value="ECO:0000250"/>
    <property type="project" value="UniProtKB"/>
</dbReference>
<dbReference type="CDD" id="cd04458">
    <property type="entry name" value="CSP_CDS"/>
    <property type="match status" value="1"/>
</dbReference>
<dbReference type="FunFam" id="4.10.60.10:FF:000007">
    <property type="entry name" value="Protein lin-28 homolog A"/>
    <property type="match status" value="1"/>
</dbReference>
<dbReference type="FunFam" id="2.40.50.140:FF:000087">
    <property type="entry name" value="Protein lin-28 homolog B"/>
    <property type="match status" value="1"/>
</dbReference>
<dbReference type="Gene3D" id="2.40.50.140">
    <property type="entry name" value="Nucleic acid-binding proteins"/>
    <property type="match status" value="1"/>
</dbReference>
<dbReference type="Gene3D" id="4.10.60.10">
    <property type="entry name" value="Zinc finger, CCHC-type"/>
    <property type="match status" value="1"/>
</dbReference>
<dbReference type="InterPro" id="IPR011129">
    <property type="entry name" value="CSD"/>
</dbReference>
<dbReference type="InterPro" id="IPR002059">
    <property type="entry name" value="CSP_DNA-bd"/>
</dbReference>
<dbReference type="InterPro" id="IPR051373">
    <property type="entry name" value="Lin-28_RNA-binding"/>
</dbReference>
<dbReference type="InterPro" id="IPR054081">
    <property type="entry name" value="Lin-28A-like_Znf-CCHC_2"/>
</dbReference>
<dbReference type="InterPro" id="IPR012340">
    <property type="entry name" value="NA-bd_OB-fold"/>
</dbReference>
<dbReference type="InterPro" id="IPR001878">
    <property type="entry name" value="Znf_CCHC"/>
</dbReference>
<dbReference type="InterPro" id="IPR036875">
    <property type="entry name" value="Znf_CCHC_sf"/>
</dbReference>
<dbReference type="PANTHER" id="PTHR46109">
    <property type="entry name" value="PROTEIN LIN-28"/>
    <property type="match status" value="1"/>
</dbReference>
<dbReference type="PANTHER" id="PTHR46109:SF3">
    <property type="entry name" value="PROTEIN LIN-28 HOMOLOG B"/>
    <property type="match status" value="1"/>
</dbReference>
<dbReference type="Pfam" id="PF00313">
    <property type="entry name" value="CSD"/>
    <property type="match status" value="1"/>
</dbReference>
<dbReference type="Pfam" id="PF21890">
    <property type="entry name" value="Lin-28A-like_zf-CCHC_2"/>
    <property type="match status" value="1"/>
</dbReference>
<dbReference type="Pfam" id="PF00098">
    <property type="entry name" value="zf-CCHC"/>
    <property type="match status" value="1"/>
</dbReference>
<dbReference type="PRINTS" id="PR00050">
    <property type="entry name" value="COLDSHOCK"/>
</dbReference>
<dbReference type="SMART" id="SM00357">
    <property type="entry name" value="CSP"/>
    <property type="match status" value="1"/>
</dbReference>
<dbReference type="SMART" id="SM00343">
    <property type="entry name" value="ZnF_C2HC"/>
    <property type="match status" value="2"/>
</dbReference>
<dbReference type="SUPFAM" id="SSF50249">
    <property type="entry name" value="Nucleic acid-binding proteins"/>
    <property type="match status" value="1"/>
</dbReference>
<dbReference type="SUPFAM" id="SSF57756">
    <property type="entry name" value="Retrovirus zinc finger-like domains"/>
    <property type="match status" value="1"/>
</dbReference>
<dbReference type="PROSITE" id="PS51857">
    <property type="entry name" value="CSD_2"/>
    <property type="match status" value="1"/>
</dbReference>
<dbReference type="PROSITE" id="PS50158">
    <property type="entry name" value="ZF_CCHC"/>
    <property type="match status" value="1"/>
</dbReference>
<comment type="function">
    <text evidence="2">Suppressor of specific microRNA (miRNA) biogenesis. Binds target primary miRNA transcripts and sequester them in the nucleolus, away from the microprocessor complex, hence preventing their processing into mature miRNA. The specific interaction with target pri-miRNAs occurs via an 5'-GGAG-3' motif in the pre-miRNA terminal loop.</text>
</comment>
<comment type="subcellular location">
    <subcellularLocation>
        <location evidence="2">Nucleus</location>
        <location evidence="2">Nucleolus</location>
    </subcellularLocation>
</comment>
<comment type="similarity">
    <text evidence="5">Belongs to the lin-28 family.</text>
</comment>
<gene>
    <name type="primary">LIN28B</name>
</gene>
<protein>
    <recommendedName>
        <fullName>Protein lin-28 homolog B</fullName>
        <shortName>Lin-28B</shortName>
    </recommendedName>
</protein>
<proteinExistence type="evidence at transcript level"/>
<evidence type="ECO:0000250" key="1"/>
<evidence type="ECO:0000250" key="2">
    <source>
        <dbReference type="UniProtKB" id="Q6ZN17"/>
    </source>
</evidence>
<evidence type="ECO:0000255" key="3">
    <source>
        <dbReference type="PROSITE-ProRule" id="PRU00047"/>
    </source>
</evidence>
<evidence type="ECO:0000256" key="4">
    <source>
        <dbReference type="SAM" id="MobiDB-lite"/>
    </source>
</evidence>
<evidence type="ECO:0000305" key="5"/>
<sequence length="250" mass="27398">MAEAGASKGGEEPGRLPEHEEEEESPLWHGAGHCKWFNVRMGFGFISMSSREGSPLESPVDVFVHQSKLYMEGFRSLKEGEPVEFTYKKSSKGLESIRVTGPGGSPCLGSERRPKGKTVQKRKPKGDRCYNCGGLDHHAKECSLPPQPKKCHYCQSIMHMVANCPHKTVSQQPTSSQGRHEAEPQPSTSAFLREGGGTYGYSSPSYSQEGRSEISERSGRSPQEASSSKLSASPEEPSRKGPSVQKRKKT</sequence>